<organism>
    <name type="scientific">Bacillus subtilis (strain 168)</name>
    <dbReference type="NCBI Taxonomy" id="224308"/>
    <lineage>
        <taxon>Bacteria</taxon>
        <taxon>Bacillati</taxon>
        <taxon>Bacillota</taxon>
        <taxon>Bacilli</taxon>
        <taxon>Bacillales</taxon>
        <taxon>Bacillaceae</taxon>
        <taxon>Bacillus</taxon>
    </lineage>
</organism>
<keyword id="KW-0010">Activator</keyword>
<keyword id="KW-0418">Kinase</keyword>
<keyword id="KW-0597">Phosphoprotein</keyword>
<keyword id="KW-1185">Reference proteome</keyword>
<keyword id="KW-0677">Repeat</keyword>
<keyword id="KW-0694">RNA-binding</keyword>
<keyword id="KW-0804">Transcription</keyword>
<keyword id="KW-0805">Transcription regulation</keyword>
<keyword id="KW-0808">Transferase</keyword>
<evidence type="ECO:0000250" key="1"/>
<evidence type="ECO:0000255" key="2"/>
<evidence type="ECO:0000255" key="3">
    <source>
        <dbReference type="PROSITE-ProRule" id="PRU00417"/>
    </source>
</evidence>
<evidence type="ECO:0000255" key="4">
    <source>
        <dbReference type="PROSITE-ProRule" id="PRU00422"/>
    </source>
</evidence>
<evidence type="ECO:0000255" key="5">
    <source>
        <dbReference type="PROSITE-ProRule" id="PRU00704"/>
    </source>
</evidence>
<evidence type="ECO:0000269" key="6">
    <source>
    </source>
</evidence>
<evidence type="ECO:0000305" key="7"/>
<comment type="function">
    <text>Positive regulator of the licABCH operon.</text>
</comment>
<comment type="activity regulation">
    <text evidence="1">The regulatory activity of LicR is modulated by phosphorylation and dephosphorylation of the various LicR domains. It becomes activated via phosphoryl group transfer from PEP, EI and HPr on the two conserved histidine residues in the PRD 2 domain, whereas phosphorylation of the EIIA-like domain on His-559 by the PTS EIIB component LicB inactivates LicR (By similarity).</text>
</comment>
<comment type="similarity">
    <text evidence="7">Belongs to the transcriptional antiterminator BglG family.</text>
</comment>
<proteinExistence type="evidence at protein level"/>
<accession>P46321</accession>
<gene>
    <name type="primary">licR</name>
    <name type="synonym">celR</name>
    <name type="ordered locus">BSU38600</name>
</gene>
<name>LICR_BACSU</name>
<dbReference type="EC" id="2.7.1.-"/>
<dbReference type="EMBL" id="Z49992">
    <property type="protein sequence ID" value="CAA90284.1"/>
    <property type="molecule type" value="Genomic_DNA"/>
</dbReference>
<dbReference type="EMBL" id="D83026">
    <property type="protein sequence ID" value="BAA11742.1"/>
    <property type="molecule type" value="Genomic_DNA"/>
</dbReference>
<dbReference type="EMBL" id="AL009126">
    <property type="protein sequence ID" value="CAB15886.1"/>
    <property type="molecule type" value="Genomic_DNA"/>
</dbReference>
<dbReference type="PIR" id="H69651">
    <property type="entry name" value="H69651"/>
</dbReference>
<dbReference type="RefSeq" id="NP_391739.1">
    <property type="nucleotide sequence ID" value="NC_000964.3"/>
</dbReference>
<dbReference type="RefSeq" id="WP_003243034.1">
    <property type="nucleotide sequence ID" value="NZ_OZ025638.1"/>
</dbReference>
<dbReference type="SMR" id="P46321"/>
<dbReference type="FunCoup" id="P46321">
    <property type="interactions" value="7"/>
</dbReference>
<dbReference type="STRING" id="224308.BSU38600"/>
<dbReference type="PaxDb" id="224308-BSU38600"/>
<dbReference type="DNASU" id="937383"/>
<dbReference type="EnsemblBacteria" id="CAB15886">
    <property type="protein sequence ID" value="CAB15886"/>
    <property type="gene ID" value="BSU_38600"/>
</dbReference>
<dbReference type="GeneID" id="937383"/>
<dbReference type="KEGG" id="bsu:BSU38600"/>
<dbReference type="PATRIC" id="fig|224308.179.peg.4179"/>
<dbReference type="eggNOG" id="COG1762">
    <property type="taxonomic scope" value="Bacteria"/>
</dbReference>
<dbReference type="eggNOG" id="COG3711">
    <property type="taxonomic scope" value="Bacteria"/>
</dbReference>
<dbReference type="InParanoid" id="P46321"/>
<dbReference type="OrthoDB" id="3710983at2"/>
<dbReference type="PhylomeDB" id="P46321"/>
<dbReference type="BioCyc" id="BSUB:BSU38600-MONOMER"/>
<dbReference type="Proteomes" id="UP000001570">
    <property type="component" value="Chromosome"/>
</dbReference>
<dbReference type="GO" id="GO:0016301">
    <property type="term" value="F:kinase activity"/>
    <property type="evidence" value="ECO:0007669"/>
    <property type="project" value="UniProtKB-KW"/>
</dbReference>
<dbReference type="GO" id="GO:0008982">
    <property type="term" value="F:protein-N(PI)-phosphohistidine-sugar phosphotransferase activity"/>
    <property type="evidence" value="ECO:0007669"/>
    <property type="project" value="InterPro"/>
</dbReference>
<dbReference type="GO" id="GO:0003723">
    <property type="term" value="F:RNA binding"/>
    <property type="evidence" value="ECO:0007669"/>
    <property type="project" value="UniProtKB-KW"/>
</dbReference>
<dbReference type="GO" id="GO:0009401">
    <property type="term" value="P:phosphoenolpyruvate-dependent sugar phosphotransferase system"/>
    <property type="evidence" value="ECO:0007669"/>
    <property type="project" value="InterPro"/>
</dbReference>
<dbReference type="GO" id="GO:0006355">
    <property type="term" value="P:regulation of DNA-templated transcription"/>
    <property type="evidence" value="ECO:0007669"/>
    <property type="project" value="InterPro"/>
</dbReference>
<dbReference type="CDD" id="cd00211">
    <property type="entry name" value="PTS_IIA_fru"/>
    <property type="match status" value="1"/>
</dbReference>
<dbReference type="CDD" id="cd05568">
    <property type="entry name" value="PTS_IIB_bgl_like"/>
    <property type="match status" value="1"/>
</dbReference>
<dbReference type="Gene3D" id="3.40.50.2300">
    <property type="match status" value="1"/>
</dbReference>
<dbReference type="Gene3D" id="3.40.930.10">
    <property type="entry name" value="Mannitol-specific EII, Chain A"/>
    <property type="match status" value="1"/>
</dbReference>
<dbReference type="Gene3D" id="1.10.1790.10">
    <property type="entry name" value="PRD domain"/>
    <property type="match status" value="2"/>
</dbReference>
<dbReference type="Gene3D" id="1.10.10.10">
    <property type="entry name" value="Winged helix-like DNA-binding domain superfamily/Winged helix DNA-binding domain"/>
    <property type="match status" value="2"/>
</dbReference>
<dbReference type="InterPro" id="IPR050661">
    <property type="entry name" value="BglG_antiterminators"/>
</dbReference>
<dbReference type="InterPro" id="IPR013196">
    <property type="entry name" value="HTH_11"/>
</dbReference>
<dbReference type="InterPro" id="IPR007737">
    <property type="entry name" value="Mga_HTH"/>
</dbReference>
<dbReference type="InterPro" id="IPR011608">
    <property type="entry name" value="PRD"/>
</dbReference>
<dbReference type="InterPro" id="IPR036634">
    <property type="entry name" value="PRD_sf"/>
</dbReference>
<dbReference type="InterPro" id="IPR016152">
    <property type="entry name" value="PTrfase/Anion_transptr"/>
</dbReference>
<dbReference type="InterPro" id="IPR002178">
    <property type="entry name" value="PTS_EIIA_type-2_dom"/>
</dbReference>
<dbReference type="InterPro" id="IPR036095">
    <property type="entry name" value="PTS_EIIB-like_sf"/>
</dbReference>
<dbReference type="InterPro" id="IPR013011">
    <property type="entry name" value="PTS_EIIB_2"/>
</dbReference>
<dbReference type="InterPro" id="IPR036388">
    <property type="entry name" value="WH-like_DNA-bd_sf"/>
</dbReference>
<dbReference type="InterPro" id="IPR036390">
    <property type="entry name" value="WH_DNA-bd_sf"/>
</dbReference>
<dbReference type="PANTHER" id="PTHR30185">
    <property type="entry name" value="CRYPTIC BETA-GLUCOSIDE BGL OPERON ANTITERMINATOR"/>
    <property type="match status" value="1"/>
</dbReference>
<dbReference type="PANTHER" id="PTHR30185:SF13">
    <property type="entry name" value="LICABCH OPERON REGULATOR-RELATED"/>
    <property type="match status" value="1"/>
</dbReference>
<dbReference type="Pfam" id="PF08279">
    <property type="entry name" value="HTH_11"/>
    <property type="match status" value="1"/>
</dbReference>
<dbReference type="Pfam" id="PF05043">
    <property type="entry name" value="Mga"/>
    <property type="match status" value="1"/>
</dbReference>
<dbReference type="Pfam" id="PF00874">
    <property type="entry name" value="PRD"/>
    <property type="match status" value="2"/>
</dbReference>
<dbReference type="Pfam" id="PF00359">
    <property type="entry name" value="PTS_EIIA_2"/>
    <property type="match status" value="1"/>
</dbReference>
<dbReference type="SUPFAM" id="SSF55804">
    <property type="entry name" value="Phoshotransferase/anion transport protein"/>
    <property type="match status" value="1"/>
</dbReference>
<dbReference type="SUPFAM" id="SSF52794">
    <property type="entry name" value="PTS system IIB component-like"/>
    <property type="match status" value="1"/>
</dbReference>
<dbReference type="SUPFAM" id="SSF63520">
    <property type="entry name" value="PTS-regulatory domain, PRD"/>
    <property type="match status" value="2"/>
</dbReference>
<dbReference type="SUPFAM" id="SSF46785">
    <property type="entry name" value="Winged helix' DNA-binding domain"/>
    <property type="match status" value="1"/>
</dbReference>
<dbReference type="PROSITE" id="PS51372">
    <property type="entry name" value="PRD_2"/>
    <property type="match status" value="2"/>
</dbReference>
<dbReference type="PROSITE" id="PS51094">
    <property type="entry name" value="PTS_EIIA_TYPE_2"/>
    <property type="match status" value="1"/>
</dbReference>
<dbReference type="PROSITE" id="PS51099">
    <property type="entry name" value="PTS_EIIB_TYPE_2"/>
    <property type="match status" value="1"/>
</dbReference>
<sequence>MLHGRLRDILRLLMAAEAPVTSSFFAAQLNVTTRTVRNDIKELQGVLSGHGAFVQSVRGSGYKLRIDDEQVFRTLLQDEFQQKKGLPVLPEERMAYLMKRLLLADHYLKLDELAEELFISKSTLQTDLKEVKKRLLPYRIVMETRPNYGFKLRGDEVQMRYCMAEYIVDERETEIDVLNEKADILPKEEIEIIRSAILKKMKNDRIPLSNMGLNNLIIHIAIACKRIRTENYVSLFPKDMDHILHQKEYQAAEAIVKELESKLSVTFPKDETAYITMHLLGTKRMTQSQCGEDTFSIEEETDQLTLAMIKAVDRELKLGILHDKELKIGLALHMKPAISRNRYGMNLRNPMLAAIKEHYPLAFEAGIIAGIVIKEQTGIEIHENEIGYLALHFGAAIERKKTESPPKRCIIVCASGAGSAQLLREKLRSHFGKRLDILGTAEYYSLDQMSYESIDFVISTIPIKKELPVPVLKVNTILGGTDFTKIESILSDEKEKANRYLKKELVFFQEDLRSKEEVIQFLGQKVVECGFADEEIIDSIFEREDMSPTCFGNLVAIPHPLVPQTKTTFWAVCTLKKPIDWESQRVQFVCLLCVEKENKADLQSMYKLLGSILDDPAAMNQLIKCRSYQELSDVFDQKMLS</sequence>
<feature type="chain" id="PRO_0000204245" description="Probable licABCH operon regulator">
    <location>
        <begin position="1"/>
        <end position="641"/>
    </location>
</feature>
<feature type="domain" description="PRD 1" evidence="5">
    <location>
        <begin position="184"/>
        <end position="289"/>
    </location>
</feature>
<feature type="domain" description="PRD 2" evidence="5">
    <location>
        <begin position="296"/>
        <end position="403"/>
    </location>
</feature>
<feature type="domain" description="PTS EIIB type-2" evidence="4">
    <location>
        <begin position="407"/>
        <end position="498"/>
    </location>
</feature>
<feature type="domain" description="PTS EIIA type-2" evidence="3">
    <location>
        <begin position="499"/>
        <end position="638"/>
    </location>
</feature>
<feature type="modified residue" description="Phosphohistidine; by HPr" evidence="5">
    <location>
        <position position="219"/>
    </location>
</feature>
<feature type="modified residue" description="Phosphohistidine; by HPr" evidence="5">
    <location>
        <position position="278"/>
    </location>
</feature>
<feature type="modified residue" description="Phosphohistidine; by HPr" evidence="5">
    <location>
        <position position="333"/>
    </location>
</feature>
<feature type="modified residue" description="Phosphohistidine; by HPr" evidence="5">
    <location>
        <position position="392"/>
    </location>
</feature>
<feature type="modified residue" description="Phosphocysteine; by EIIA" evidence="2">
    <location>
        <position position="413"/>
    </location>
</feature>
<feature type="modified residue" description="Phosphohistidine; by EIIB" evidence="5">
    <location>
        <position position="559"/>
    </location>
</feature>
<feature type="mutagenesis site" description="Residual activity." evidence="6">
    <original>H</original>
    <variation>A</variation>
    <location>
        <position position="219"/>
    </location>
</feature>
<feature type="mutagenesis site" description="Loss of activity." evidence="6">
    <original>H</original>
    <variation>D</variation>
    <location>
        <position position="219"/>
    </location>
</feature>
<feature type="mutagenesis site" description="Loss of activity." evidence="6">
    <original>H</original>
    <variation>A</variation>
    <location>
        <position position="278"/>
    </location>
</feature>
<feature type="mutagenesis site" description="Loss of activity." evidence="6">
    <original>H</original>
    <variation>E</variation>
    <location>
        <position position="278"/>
    </location>
</feature>
<feature type="mutagenesis site" description="Loss of activity." evidence="6">
    <original>H</original>
    <variation>A</variation>
    <location>
        <position position="333"/>
    </location>
</feature>
<feature type="mutagenesis site" description="Loss of activity." evidence="6">
    <original>H</original>
    <variation>E</variation>
    <location>
        <position position="392"/>
    </location>
</feature>
<feature type="mutagenesis site" description="Residual activity." evidence="6">
    <original>H</original>
    <variation>I</variation>
    <location>
        <position position="392"/>
    </location>
</feature>
<feature type="mutagenesis site" description="Increase in activity." evidence="6">
    <original>H</original>
    <variation>G</variation>
    <location>
        <position position="559"/>
    </location>
</feature>
<reference key="1">
    <citation type="journal article" date="1997" name="J. Bacteriol.">
        <title>Identification and characterization of a new beta-glucoside utilization system in Bacillus subtilis.</title>
        <authorList>
            <person name="Tobisch S."/>
            <person name="Glaser P."/>
            <person name="Krueger S."/>
            <person name="Hecker M."/>
        </authorList>
    </citation>
    <scope>NUCLEOTIDE SEQUENCE [GENOMIC DNA]</scope>
    <source>
        <strain>168</strain>
    </source>
</reference>
<reference key="2">
    <citation type="journal article" date="1996" name="Microbiology">
        <title>Sequencing of a 65 kb region of the Bacillus subtilis genome containing the lic and cel loci, and creation of a 177 kb contig covering the gnt-sacXY region.</title>
        <authorList>
            <person name="Yoshida K."/>
            <person name="Shindo K."/>
            <person name="Sano H."/>
            <person name="Seki S."/>
            <person name="Fujimura M."/>
            <person name="Yanai N."/>
            <person name="Miwa Y."/>
            <person name="Fujita Y."/>
        </authorList>
    </citation>
    <scope>NUCLEOTIDE SEQUENCE [GENOMIC DNA]</scope>
    <source>
        <strain>168 / BGSC1A1</strain>
    </source>
</reference>
<reference key="3">
    <citation type="journal article" date="1997" name="Nature">
        <title>The complete genome sequence of the Gram-positive bacterium Bacillus subtilis.</title>
        <authorList>
            <person name="Kunst F."/>
            <person name="Ogasawara N."/>
            <person name="Moszer I."/>
            <person name="Albertini A.M."/>
            <person name="Alloni G."/>
            <person name="Azevedo V."/>
            <person name="Bertero M.G."/>
            <person name="Bessieres P."/>
            <person name="Bolotin A."/>
            <person name="Borchert S."/>
            <person name="Borriss R."/>
            <person name="Boursier L."/>
            <person name="Brans A."/>
            <person name="Braun M."/>
            <person name="Brignell S.C."/>
            <person name="Bron S."/>
            <person name="Brouillet S."/>
            <person name="Bruschi C.V."/>
            <person name="Caldwell B."/>
            <person name="Capuano V."/>
            <person name="Carter N.M."/>
            <person name="Choi S.-K."/>
            <person name="Codani J.-J."/>
            <person name="Connerton I.F."/>
            <person name="Cummings N.J."/>
            <person name="Daniel R.A."/>
            <person name="Denizot F."/>
            <person name="Devine K.M."/>
            <person name="Duesterhoeft A."/>
            <person name="Ehrlich S.D."/>
            <person name="Emmerson P.T."/>
            <person name="Entian K.-D."/>
            <person name="Errington J."/>
            <person name="Fabret C."/>
            <person name="Ferrari E."/>
            <person name="Foulger D."/>
            <person name="Fritz C."/>
            <person name="Fujita M."/>
            <person name="Fujita Y."/>
            <person name="Fuma S."/>
            <person name="Galizzi A."/>
            <person name="Galleron N."/>
            <person name="Ghim S.-Y."/>
            <person name="Glaser P."/>
            <person name="Goffeau A."/>
            <person name="Golightly E.J."/>
            <person name="Grandi G."/>
            <person name="Guiseppi G."/>
            <person name="Guy B.J."/>
            <person name="Haga K."/>
            <person name="Haiech J."/>
            <person name="Harwood C.R."/>
            <person name="Henaut A."/>
            <person name="Hilbert H."/>
            <person name="Holsappel S."/>
            <person name="Hosono S."/>
            <person name="Hullo M.-F."/>
            <person name="Itaya M."/>
            <person name="Jones L.-M."/>
            <person name="Joris B."/>
            <person name="Karamata D."/>
            <person name="Kasahara Y."/>
            <person name="Klaerr-Blanchard M."/>
            <person name="Klein C."/>
            <person name="Kobayashi Y."/>
            <person name="Koetter P."/>
            <person name="Koningstein G."/>
            <person name="Krogh S."/>
            <person name="Kumano M."/>
            <person name="Kurita K."/>
            <person name="Lapidus A."/>
            <person name="Lardinois S."/>
            <person name="Lauber J."/>
            <person name="Lazarevic V."/>
            <person name="Lee S.-M."/>
            <person name="Levine A."/>
            <person name="Liu H."/>
            <person name="Masuda S."/>
            <person name="Mauel C."/>
            <person name="Medigue C."/>
            <person name="Medina N."/>
            <person name="Mellado R.P."/>
            <person name="Mizuno M."/>
            <person name="Moestl D."/>
            <person name="Nakai S."/>
            <person name="Noback M."/>
            <person name="Noone D."/>
            <person name="O'Reilly M."/>
            <person name="Ogawa K."/>
            <person name="Ogiwara A."/>
            <person name="Oudega B."/>
            <person name="Park S.-H."/>
            <person name="Parro V."/>
            <person name="Pohl T.M."/>
            <person name="Portetelle D."/>
            <person name="Porwollik S."/>
            <person name="Prescott A.M."/>
            <person name="Presecan E."/>
            <person name="Pujic P."/>
            <person name="Purnelle B."/>
            <person name="Rapoport G."/>
            <person name="Rey M."/>
            <person name="Reynolds S."/>
            <person name="Rieger M."/>
            <person name="Rivolta C."/>
            <person name="Rocha E."/>
            <person name="Roche B."/>
            <person name="Rose M."/>
            <person name="Sadaie Y."/>
            <person name="Sato T."/>
            <person name="Scanlan E."/>
            <person name="Schleich S."/>
            <person name="Schroeter R."/>
            <person name="Scoffone F."/>
            <person name="Sekiguchi J."/>
            <person name="Sekowska A."/>
            <person name="Seror S.J."/>
            <person name="Serror P."/>
            <person name="Shin B.-S."/>
            <person name="Soldo B."/>
            <person name="Sorokin A."/>
            <person name="Tacconi E."/>
            <person name="Takagi T."/>
            <person name="Takahashi H."/>
            <person name="Takemaru K."/>
            <person name="Takeuchi M."/>
            <person name="Tamakoshi A."/>
            <person name="Tanaka T."/>
            <person name="Terpstra P."/>
            <person name="Tognoni A."/>
            <person name="Tosato V."/>
            <person name="Uchiyama S."/>
            <person name="Vandenbol M."/>
            <person name="Vannier F."/>
            <person name="Vassarotti A."/>
            <person name="Viari A."/>
            <person name="Wambutt R."/>
            <person name="Wedler E."/>
            <person name="Wedler H."/>
            <person name="Weitzenegger T."/>
            <person name="Winters P."/>
            <person name="Wipat A."/>
            <person name="Yamamoto H."/>
            <person name="Yamane K."/>
            <person name="Yasumoto K."/>
            <person name="Yata K."/>
            <person name="Yoshida K."/>
            <person name="Yoshikawa H.-F."/>
            <person name="Zumstein E."/>
            <person name="Yoshikawa H."/>
            <person name="Danchin A."/>
        </authorList>
    </citation>
    <scope>NUCLEOTIDE SEQUENCE [LARGE SCALE GENOMIC DNA]</scope>
    <source>
        <strain>168</strain>
    </source>
</reference>
<reference key="4">
    <citation type="journal article" date="1999" name="J. Bacteriol.">
        <title>Regulation of the lic operon of Bacillus subtilis and characterization of potential phosphorylation sites of the LicR regulator protein by site-directed mutagenesis.</title>
        <authorList>
            <person name="Tobisch S."/>
            <person name="Stuelke J."/>
            <person name="Hecker M."/>
        </authorList>
    </citation>
    <scope>MUTAGENESIS OF HIS-219; HIS-278; HIS-333; HIS-392 AND HIS-559</scope>
</reference>
<protein>
    <recommendedName>
        <fullName>Probable licABCH operon regulator</fullName>
    </recommendedName>
    <domain>
        <recommendedName>
            <fullName>Putative phosphotransferase enzyme IIB component</fullName>
            <ecNumber>2.7.1.-</ecNumber>
        </recommendedName>
        <alternativeName>
            <fullName>Putative PTS system EIIB component</fullName>
        </alternativeName>
    </domain>
    <domain>
        <recommendedName>
            <fullName>Putative phosphotransferase enzyme IIA component</fullName>
        </recommendedName>
        <alternativeName>
            <fullName>Putative PTS system EIIA component</fullName>
        </alternativeName>
    </domain>
</protein>